<dbReference type="EMBL" id="EU197055">
    <property type="protein sequence ID" value="ABY62937.1"/>
    <property type="molecule type" value="Genomic_DNA"/>
</dbReference>
<dbReference type="RefSeq" id="YP_001956829.1">
    <property type="nucleotide sequence ID" value="NC_010821.1"/>
</dbReference>
<dbReference type="PDB" id="7SQQ">
    <property type="method" value="EM"/>
    <property type="resolution" value="4.20 A"/>
    <property type="chains" value="A/B/C/D/E/F/G/H/I/J/K/L/M/N/O/P/Q/R/S/T/V/W/X/Y=1-631"/>
</dbReference>
<dbReference type="PDB" id="7SQR">
    <property type="method" value="EM"/>
    <property type="resolution" value="3.40 A"/>
    <property type="chains" value="A/B/C/D/E/F/G/H/I/J/K/L=1-631"/>
</dbReference>
<dbReference type="PDB" id="7SQS">
    <property type="method" value="EM"/>
    <property type="resolution" value="3.10 A"/>
    <property type="chains" value="A/B/C/D/E=1-631"/>
</dbReference>
<dbReference type="PDB" id="8IGG">
    <property type="method" value="EM"/>
    <property type="resolution" value="4.09 A"/>
    <property type="chains" value="A/B/C/E=1-631"/>
</dbReference>
<dbReference type="PDBsum" id="7SQQ"/>
<dbReference type="PDBsum" id="7SQR"/>
<dbReference type="PDBsum" id="7SQS"/>
<dbReference type="PDBsum" id="8IGG"/>
<dbReference type="EMDB" id="EMD-25390"/>
<dbReference type="EMDB" id="EMD-25391"/>
<dbReference type="EMDB" id="EMD-25392"/>
<dbReference type="EMDB" id="EMD-35432"/>
<dbReference type="SMR" id="B3FIW8"/>
<dbReference type="KEGG" id="vg:6372313"/>
<dbReference type="OrthoDB" id="9270at10239"/>
<dbReference type="Proteomes" id="UP000002421">
    <property type="component" value="Genome"/>
</dbReference>
<dbReference type="GO" id="GO:0030430">
    <property type="term" value="C:host cell cytoplasm"/>
    <property type="evidence" value="ECO:0007669"/>
    <property type="project" value="UniProtKB-SubCell"/>
</dbReference>
<comment type="function">
    <text evidence="2 3 4 8">Self-assembles to form a proteinaceous shell that encloses the viral DNA and compartmentalizes proteins and DNA during viral infection (PubMed:28082593, PubMed:28813669, PubMed:35922510). This micrometer-scale compartment contains narrow pores and is the site of viral replication, with the proteins involved in DNA replication localized inside (PubMed:28082593, PubMed:28813669, PubMed:35922510). Provides a surface for docking of capsids during packaging (PubMed:28082593, PubMed:28813669). Probably protects the viral genome against host defenses (Probable).</text>
</comment>
<comment type="subunit">
    <text evidence="4">Homotetramer (PubMed:35922510). The tetrameric protomers further assemble as a square grid (PubMed:35922510).</text>
</comment>
<comment type="subcellular location">
    <subcellularLocation>
        <location evidence="2 3 4">Host cytoplasm</location>
    </subcellularLocation>
    <text evidence="2 3 4">In infected host cells assembles as a nucleus-like structure in the host cytoplasm.</text>
</comment>
<comment type="induction">
    <text evidence="2">Expressed very early after infection (PubMed:28082593). Encloses the DNA at 45 mpi (PubMed:28082593).</text>
</comment>
<comment type="similarity">
    <text evidence="7">Belongs to the Phikzvirus chimallin family.</text>
</comment>
<accession>B3FIW8</accession>
<proteinExistence type="evidence at protein level"/>
<evidence type="ECO:0000256" key="1">
    <source>
        <dbReference type="SAM" id="MobiDB-lite"/>
    </source>
</evidence>
<evidence type="ECO:0000269" key="2">
    <source>
    </source>
</evidence>
<evidence type="ECO:0000269" key="3">
    <source>
    </source>
</evidence>
<evidence type="ECO:0000269" key="4">
    <source>
    </source>
</evidence>
<evidence type="ECO:0000303" key="5">
    <source>
    </source>
</evidence>
<evidence type="ECO:0000303" key="6">
    <source>
    </source>
</evidence>
<evidence type="ECO:0000305" key="7"/>
<evidence type="ECO:0000305" key="8">
    <source>
    </source>
</evidence>
<evidence type="ECO:0000312" key="9">
    <source>
        <dbReference type="EMBL" id="ABY62937.1"/>
    </source>
</evidence>
<evidence type="ECO:0007829" key="10">
    <source>
        <dbReference type="PDB" id="7SQR"/>
    </source>
</evidence>
<evidence type="ECO:0007829" key="11">
    <source>
        <dbReference type="PDB" id="7SQS"/>
    </source>
</evidence>
<name>CHMA_BP201</name>
<reference key="1">
    <citation type="journal article" date="2008" name="Virology">
        <title>Characterization of Pseudomonas chlororaphis myovirus 201varphi2-1 via genomic sequencing, mass spectrometry, and electron microscopy.</title>
        <authorList>
            <person name="Thomas J.A."/>
            <person name="Rolando M.R."/>
            <person name="Carroll C.A."/>
            <person name="Shen P.S."/>
            <person name="Belnap D.M."/>
            <person name="Weintraub S.T."/>
            <person name="Serwer P."/>
            <person name="Hardies S.C."/>
        </authorList>
    </citation>
    <scope>NUCLEOTIDE SEQUENCE [GENOMIC DNA]</scope>
</reference>
<reference key="2">
    <citation type="journal article" date="2017" name="Science">
        <title>Assembly of a nucleus-like structure during viral replication in bacteria.</title>
        <authorList>
            <person name="Chaikeeratisak V."/>
            <person name="Nguyen K."/>
            <person name="Khanna K."/>
            <person name="Brilot A.F."/>
            <person name="Erb M.L."/>
            <person name="Coker J.K."/>
            <person name="Vavilina A."/>
            <person name="Newton G.L."/>
            <person name="Buschauer R."/>
            <person name="Pogliano K."/>
            <person name="Villa E."/>
            <person name="Agard D.A."/>
            <person name="Pogliano J."/>
        </authorList>
    </citation>
    <scope>FUNCTION</scope>
    <scope>SUBCELLULAR LOCATION</scope>
</reference>
<reference key="3">
    <citation type="journal article" date="2017" name="Cell Rep.">
        <title>The Phage Nucleus and Tubulin Spindle Are Conserved among Large Pseudomonas Phages.</title>
        <authorList>
            <person name="Chaikeeratisak V."/>
            <person name="Nguyen K."/>
            <person name="Egan M.E."/>
            <person name="Erb M.L."/>
            <person name="Vavilina A."/>
            <person name="Pogliano J."/>
        </authorList>
    </citation>
    <scope>FUNCTION</scope>
    <scope>SUBCELLULAR LOCATION</scope>
</reference>
<reference key="4">
    <citation type="journal article" date="2022" name="Nature">
        <title>Architecture and self-assembly of the jumbo bacteriophage nuclear shell.</title>
        <authorList>
            <person name="Laughlin T.G."/>
            <person name="Deep A."/>
            <person name="Prichard A.M."/>
            <person name="Seitz C."/>
            <person name="Gu Y."/>
            <person name="Enustun E."/>
            <person name="Suslov S."/>
            <person name="Khanna K."/>
            <person name="Birkholz E.A."/>
            <person name="Armbruster E."/>
            <person name="McCammon J.A."/>
            <person name="Amaro R.E."/>
            <person name="Pogliano J."/>
            <person name="Corbett K.D."/>
            <person name="Villa E."/>
        </authorList>
    </citation>
    <scope>STRUCTURE BY ELECTRON MICROSCOPY (24.0 ANGSTROMS) OF NUCLEAR SHELL</scope>
    <scope>STRUCTURE BY ELECTRON MICROSCOPY (3.1 ANGSTROMS) OF PROTOMER</scope>
    <scope>FUNCTION</scope>
    <scope>SUBCELLULAR LOCATION</scope>
    <scope>SUBUNIT</scope>
</reference>
<feature type="chain" id="PRO_0000448590" description="Chimallin">
    <location>
        <begin position="1"/>
        <end position="631"/>
    </location>
</feature>
<feature type="region of interest" description="Disordered" evidence="1">
    <location>
        <begin position="1"/>
        <end position="63"/>
    </location>
</feature>
<feature type="region of interest" description="Homotetramerization" evidence="4">
    <location>
        <begin position="590"/>
        <end position="611"/>
    </location>
</feature>
<feature type="region of interest" description="Homotetramerization" evidence="4">
    <location>
        <begin position="622"/>
        <end position="631"/>
    </location>
</feature>
<feature type="compositionally biased region" description="Low complexity" evidence="1">
    <location>
        <begin position="1"/>
        <end position="29"/>
    </location>
</feature>
<feature type="compositionally biased region" description="Polar residues" evidence="1">
    <location>
        <begin position="32"/>
        <end position="59"/>
    </location>
</feature>
<feature type="helix" evidence="11">
    <location>
        <begin position="49"/>
        <end position="54"/>
    </location>
</feature>
<feature type="helix" evidence="11">
    <location>
        <begin position="68"/>
        <end position="83"/>
    </location>
</feature>
<feature type="strand" evidence="11">
    <location>
        <begin position="92"/>
        <end position="96"/>
    </location>
</feature>
<feature type="turn" evidence="11">
    <location>
        <begin position="99"/>
        <end position="102"/>
    </location>
</feature>
<feature type="strand" evidence="11">
    <location>
        <begin position="107"/>
        <end position="116"/>
    </location>
</feature>
<feature type="strand" evidence="11">
    <location>
        <begin position="119"/>
        <end position="124"/>
    </location>
</feature>
<feature type="strand" evidence="11">
    <location>
        <begin position="132"/>
        <end position="134"/>
    </location>
</feature>
<feature type="strand" evidence="11">
    <location>
        <begin position="140"/>
        <end position="145"/>
    </location>
</feature>
<feature type="strand" evidence="11">
    <location>
        <begin position="148"/>
        <end position="153"/>
    </location>
</feature>
<feature type="helix" evidence="11">
    <location>
        <begin position="158"/>
        <end position="161"/>
    </location>
</feature>
<feature type="helix" evidence="11">
    <location>
        <begin position="164"/>
        <end position="177"/>
    </location>
</feature>
<feature type="strand" evidence="11">
    <location>
        <begin position="184"/>
        <end position="187"/>
    </location>
</feature>
<feature type="helix" evidence="10">
    <location>
        <begin position="199"/>
        <end position="201"/>
    </location>
</feature>
<feature type="helix" evidence="11">
    <location>
        <begin position="203"/>
        <end position="225"/>
    </location>
</feature>
<feature type="helix" evidence="11">
    <location>
        <begin position="232"/>
        <end position="235"/>
    </location>
</feature>
<feature type="strand" evidence="11">
    <location>
        <begin position="242"/>
        <end position="249"/>
    </location>
</feature>
<feature type="strand" evidence="11">
    <location>
        <begin position="265"/>
        <end position="273"/>
    </location>
</feature>
<feature type="strand" evidence="11">
    <location>
        <begin position="291"/>
        <end position="301"/>
    </location>
</feature>
<feature type="strand" evidence="11">
    <location>
        <begin position="322"/>
        <end position="334"/>
    </location>
</feature>
<feature type="helix" evidence="11">
    <location>
        <begin position="343"/>
        <end position="350"/>
    </location>
</feature>
<feature type="helix" evidence="11">
    <location>
        <begin position="351"/>
        <end position="357"/>
    </location>
</feature>
<feature type="turn" evidence="11">
    <location>
        <begin position="358"/>
        <end position="360"/>
    </location>
</feature>
<feature type="helix" evidence="11">
    <location>
        <begin position="361"/>
        <end position="366"/>
    </location>
</feature>
<feature type="strand" evidence="11">
    <location>
        <begin position="375"/>
        <end position="377"/>
    </location>
</feature>
<feature type="helix" evidence="11">
    <location>
        <begin position="379"/>
        <end position="385"/>
    </location>
</feature>
<feature type="strand" evidence="11">
    <location>
        <begin position="386"/>
        <end position="390"/>
    </location>
</feature>
<feature type="strand" evidence="11">
    <location>
        <begin position="395"/>
        <end position="398"/>
    </location>
</feature>
<feature type="helix" evidence="11">
    <location>
        <begin position="401"/>
        <end position="411"/>
    </location>
</feature>
<feature type="strand" evidence="11">
    <location>
        <begin position="417"/>
        <end position="422"/>
    </location>
</feature>
<feature type="helix" evidence="11">
    <location>
        <begin position="429"/>
        <end position="439"/>
    </location>
</feature>
<feature type="strand" evidence="11">
    <location>
        <begin position="440"/>
        <end position="444"/>
    </location>
</feature>
<feature type="helix" evidence="11">
    <location>
        <begin position="445"/>
        <end position="457"/>
    </location>
</feature>
<feature type="helix" evidence="11">
    <location>
        <begin position="463"/>
        <end position="465"/>
    </location>
</feature>
<feature type="helix" evidence="11">
    <location>
        <begin position="469"/>
        <end position="471"/>
    </location>
</feature>
<feature type="strand" evidence="11">
    <location>
        <begin position="474"/>
        <end position="488"/>
    </location>
</feature>
<feature type="strand" evidence="11">
    <location>
        <begin position="490"/>
        <end position="495"/>
    </location>
</feature>
<feature type="helix" evidence="11">
    <location>
        <begin position="496"/>
        <end position="498"/>
    </location>
</feature>
<feature type="helix" evidence="11">
    <location>
        <begin position="501"/>
        <end position="507"/>
    </location>
</feature>
<feature type="strand" evidence="11">
    <location>
        <begin position="508"/>
        <end position="510"/>
    </location>
</feature>
<feature type="helix" evidence="11">
    <location>
        <begin position="512"/>
        <end position="523"/>
    </location>
</feature>
<feature type="strand" evidence="11">
    <location>
        <begin position="525"/>
        <end position="527"/>
    </location>
</feature>
<feature type="helix" evidence="11">
    <location>
        <begin position="529"/>
        <end position="543"/>
    </location>
</feature>
<feature type="strand" evidence="11">
    <location>
        <begin position="549"/>
        <end position="559"/>
    </location>
</feature>
<feature type="helix" evidence="11">
    <location>
        <begin position="561"/>
        <end position="573"/>
    </location>
</feature>
<feature type="helix" evidence="11">
    <location>
        <begin position="598"/>
        <end position="600"/>
    </location>
</feature>
<organismHost>
    <name type="scientific">Pseudomonas chlororaphis</name>
    <dbReference type="NCBI Taxonomy" id="587753"/>
</organismHost>
<sequence length="631" mass="69450">MIRDTATNTTQTQAAPQQAPAQQFTQAPQEKPMQSTQSQPTPSYAGTGGINSQFTRSGNVQGGDARASEALTVFTRLKEQAVAQQDLADDFSILRFDRDQHQVGWSSLVIAKQISLNGQPVIAVRPLILPNNSIELPKRKTNIVNGMQTDVIESDIDVGTVFSAQYFNRLSTYVQNTLGKPGAKVVLAGPFPIPADLVLKDSELQLRNLLIKSVNACDDILALHSGERPFTIAGLKGQQGETLAAKVDIRTQPLHDTVGNPIRADIVVTTQRVRRNGQQENEFYETDVKLNQVAMFTNLERTPQAQAQTLFPNQQQVATPAPWVASVVITDVRNADGIQANTPEMYWFALSNAFRSTHGHAWARPFLPMTGVAKDMKDIGALGWMSALRNRIDTKAANFDDAQFGQLMLSQVQPNPVFQIDLNRMGETAQMDSLQLDAAGGPNAQKAAATIIRQINNLGGGGFERFFDHTTQPILERTGQVIDLGNWFDGDEKRDRRDLDNLAALNAAEGNENEFWGFYGAQLNPNLHPDLRNRQSRNYDRQYLGSTVTYTGKAERCTYNAKFIEALDRYLAEAGLQITMDNTSVLNSGQRFMGNSVIGNNMVSGQAQVHSAYAGTQGFNTQYQTGPSSFY</sequence>
<keyword id="KW-0002">3D-structure</keyword>
<keyword id="KW-1035">Host cytoplasm</keyword>
<keyword id="KW-1185">Reference proteome</keyword>
<organism>
    <name type="scientific">Pseudomonas phage 201phi2-1</name>
    <name type="common">Pseudomonas chlororaphis phage 201phi2-1</name>
    <dbReference type="NCBI Taxonomy" id="198110"/>
    <lineage>
        <taxon>Viruses</taxon>
        <taxon>Duplodnaviria</taxon>
        <taxon>Heunggongvirae</taxon>
        <taxon>Uroviricota</taxon>
        <taxon>Caudoviricetes</taxon>
        <taxon>Serwervirus</taxon>
        <taxon>Serwervirus 201phi21</taxon>
    </lineage>
</organism>
<gene>
    <name evidence="9" type="ORF">201phi2-1p105</name>
</gene>
<protein>
    <recommendedName>
        <fullName evidence="6">Chimallin</fullName>
        <shortName evidence="6">ChmA</shortName>
    </recommendedName>
    <alternativeName>
        <fullName evidence="7">Phage nucleus enclosure protein</fullName>
        <shortName evidence="7">PhuN</shortName>
    </alternativeName>
    <alternativeName>
        <fullName evidence="5">gene product 105</fullName>
        <shortName>gp105</shortName>
    </alternativeName>
</protein>